<proteinExistence type="evidence at protein level"/>
<reference key="1">
    <citation type="journal article" date="1996" name="Biosci. Biotechnol. Biochem.">
        <title>Analysis of the Escherichia coli gntT and gntU genes and comparison of the products with their homologues.</title>
        <authorList>
            <person name="Yamada M."/>
            <person name="Kawai T."/>
            <person name="Izu H."/>
        </authorList>
    </citation>
    <scope>NUCLEOTIDE SEQUENCE [GENOMIC DNA]</scope>
    <source>
        <strain>K12 / W3110 / ATCC 27325 / DSM 5911</strain>
    </source>
</reference>
<reference key="2">
    <citation type="journal article" date="1997" name="J. Mol. Biol.">
        <title>Gene organization and transcriptional regulation of the gntRKU operon involved in gluconate uptake and catabolism of Escherichia coli.</title>
        <authorList>
            <person name="Izu H."/>
            <person name="Adachi O."/>
            <person name="Yamada M."/>
        </authorList>
    </citation>
    <scope>NUCLEOTIDE SEQUENCE [GENOMIC DNA]</scope>
    <source>
        <strain>K12 / W3110 / ATCC 27325 / DSM 5911</strain>
    </source>
</reference>
<reference key="3">
    <citation type="journal article" date="1997" name="Science">
        <title>The complete genome sequence of Escherichia coli K-12.</title>
        <authorList>
            <person name="Blattner F.R."/>
            <person name="Plunkett G. III"/>
            <person name="Bloch C.A."/>
            <person name="Perna N.T."/>
            <person name="Burland V."/>
            <person name="Riley M."/>
            <person name="Collado-Vides J."/>
            <person name="Glasner J.D."/>
            <person name="Rode C.K."/>
            <person name="Mayhew G.F."/>
            <person name="Gregor J."/>
            <person name="Davis N.W."/>
            <person name="Kirkpatrick H.A."/>
            <person name="Goeden M.A."/>
            <person name="Rose D.J."/>
            <person name="Mau B."/>
            <person name="Shao Y."/>
        </authorList>
    </citation>
    <scope>NUCLEOTIDE SEQUENCE [LARGE SCALE GENOMIC DNA]</scope>
    <source>
        <strain>K12 / MG1655 / ATCC 47076</strain>
    </source>
</reference>
<reference key="4">
    <citation type="journal article" date="2006" name="Nucleic Acids Res.">
        <title>Escherichia coli K-12: a cooperatively developed annotation snapshot -- 2005.</title>
        <authorList>
            <person name="Riley M."/>
            <person name="Abe T."/>
            <person name="Arnaud M.B."/>
            <person name="Berlyn M.K.B."/>
            <person name="Blattner F.R."/>
            <person name="Chaudhuri R.R."/>
            <person name="Glasner J.D."/>
            <person name="Horiuchi T."/>
            <person name="Keseler I.M."/>
            <person name="Kosuge T."/>
            <person name="Mori H."/>
            <person name="Perna N.T."/>
            <person name="Plunkett G. III"/>
            <person name="Rudd K.E."/>
            <person name="Serres M.H."/>
            <person name="Thomas G.H."/>
            <person name="Thomson N.R."/>
            <person name="Wishart D."/>
            <person name="Wanner B.L."/>
        </authorList>
    </citation>
    <scope>SEQUENCE REVISION</scope>
</reference>
<reference key="5">
    <citation type="journal article" date="2006" name="Mol. Syst. Biol.">
        <title>Highly accurate genome sequences of Escherichia coli K-12 strains MG1655 and W3110.</title>
        <authorList>
            <person name="Hayashi K."/>
            <person name="Morooka N."/>
            <person name="Yamamoto Y."/>
            <person name="Fujita K."/>
            <person name="Isono K."/>
            <person name="Choi S."/>
            <person name="Ohtsubo E."/>
            <person name="Baba T."/>
            <person name="Wanner B.L."/>
            <person name="Mori H."/>
            <person name="Horiuchi T."/>
        </authorList>
    </citation>
    <scope>NUCLEOTIDE SEQUENCE [LARGE SCALE GENOMIC DNA]</scope>
    <source>
        <strain>K12 / W3110 / ATCC 27325 / DSM 5911</strain>
    </source>
</reference>
<reference key="6">
    <citation type="journal article" date="1996" name="J. Bacteriol.">
        <title>Cloning and molecular genetic characterization of the Escherichia coli gntR, gntK, and gntU genes of GntI, the main system for gluconate metabolism.</title>
        <authorList>
            <person name="Tong S."/>
            <person name="Porco A."/>
            <person name="Isturiz T."/>
            <person name="Conway T."/>
        </authorList>
    </citation>
    <scope>CHARACTERIZATION</scope>
</reference>
<reference key="7">
    <citation type="journal article" date="2005" name="Science">
        <title>Global topology analysis of the Escherichia coli inner membrane proteome.</title>
        <authorList>
            <person name="Daley D.O."/>
            <person name="Rapp M."/>
            <person name="Granseth E."/>
            <person name="Melen K."/>
            <person name="Drew D."/>
            <person name="von Heijne G."/>
        </authorList>
    </citation>
    <scope>TOPOLOGY [LARGE SCALE ANALYSIS]</scope>
    <source>
        <strain>K12 / MG1655 / ATCC 47076</strain>
    </source>
</reference>
<gene>
    <name type="primary">gntU</name>
    <name type="ordered locus">b4476</name>
    <name type="ordered locus">JW5686</name>
</gene>
<evidence type="ECO:0000255" key="1"/>
<evidence type="ECO:0000305" key="2"/>
<dbReference type="EMBL" id="D84362">
    <property type="protein sequence ID" value="BAA12326.1"/>
    <property type="molecule type" value="Genomic_DNA"/>
</dbReference>
<dbReference type="EMBL" id="U18997">
    <property type="protein sequence ID" value="AAA58233.1"/>
    <property type="status" value="ALT_FRAME"/>
    <property type="molecule type" value="Genomic_DNA"/>
</dbReference>
<dbReference type="EMBL" id="U18997">
    <property type="protein sequence ID" value="AAA58234.1"/>
    <property type="status" value="ALT_FRAME"/>
    <property type="molecule type" value="Genomic_DNA"/>
</dbReference>
<dbReference type="EMBL" id="U00096">
    <property type="protein sequence ID" value="AAT48183.1"/>
    <property type="molecule type" value="Genomic_DNA"/>
</dbReference>
<dbReference type="EMBL" id="AP009048">
    <property type="protein sequence ID" value="BAE77857.1"/>
    <property type="molecule type" value="Genomic_DNA"/>
</dbReference>
<dbReference type="PIR" id="JC4989">
    <property type="entry name" value="JC4989"/>
</dbReference>
<dbReference type="RefSeq" id="WP_000210111.1">
    <property type="nucleotide sequence ID" value="NZ_SSZK01000008.1"/>
</dbReference>
<dbReference type="RefSeq" id="YP_026221.1">
    <property type="nucleotide sequence ID" value="NC_000913.3"/>
</dbReference>
<dbReference type="SMR" id="P0AC96"/>
<dbReference type="BioGRID" id="4261494">
    <property type="interactions" value="5"/>
</dbReference>
<dbReference type="FunCoup" id="P0AC96">
    <property type="interactions" value="64"/>
</dbReference>
<dbReference type="STRING" id="511145.b4476"/>
<dbReference type="TCDB" id="2.A.8.1.8">
    <property type="family name" value="the gluconate:h(+) symporter (gntp) family"/>
</dbReference>
<dbReference type="jPOST" id="P0AC96"/>
<dbReference type="PaxDb" id="511145-b4476"/>
<dbReference type="DNASU" id="2847760"/>
<dbReference type="EnsemblBacteria" id="AAT48183">
    <property type="protein sequence ID" value="AAT48183"/>
    <property type="gene ID" value="b4476"/>
</dbReference>
<dbReference type="GeneID" id="2847760"/>
<dbReference type="GeneID" id="75202280"/>
<dbReference type="KEGG" id="ecj:JW5686"/>
<dbReference type="KEGG" id="eco:b4476"/>
<dbReference type="KEGG" id="ecoc:C3026_18620"/>
<dbReference type="PATRIC" id="fig|1411691.4.peg.3293"/>
<dbReference type="EchoBASE" id="EB2515"/>
<dbReference type="eggNOG" id="COG2610">
    <property type="taxonomic scope" value="Bacteria"/>
</dbReference>
<dbReference type="HOGENOM" id="CLU_027949_0_2_6"/>
<dbReference type="InParanoid" id="P0AC96"/>
<dbReference type="OMA" id="KVMDICS"/>
<dbReference type="OrthoDB" id="9787129at2"/>
<dbReference type="PhylomeDB" id="P0AC96"/>
<dbReference type="BioCyc" id="EcoCyc:GNTU-MONOMER"/>
<dbReference type="BioCyc" id="MetaCyc:GNTU-MONOMER"/>
<dbReference type="SABIO-RK" id="P0AC96"/>
<dbReference type="PRO" id="PR:P0AC96"/>
<dbReference type="Proteomes" id="UP000000625">
    <property type="component" value="Chromosome"/>
</dbReference>
<dbReference type="GO" id="GO:0005886">
    <property type="term" value="C:plasma membrane"/>
    <property type="evidence" value="ECO:0000314"/>
    <property type="project" value="EcoCyc"/>
</dbReference>
<dbReference type="GO" id="GO:0005402">
    <property type="term" value="F:carbohydrate:monoatomic cation symporter activity"/>
    <property type="evidence" value="ECO:0000314"/>
    <property type="project" value="EcoCyc"/>
</dbReference>
<dbReference type="GO" id="GO:0015128">
    <property type="term" value="F:gluconate transmembrane transporter activity"/>
    <property type="evidence" value="ECO:0000269"/>
    <property type="project" value="EcoCyc"/>
</dbReference>
<dbReference type="GO" id="GO:0019521">
    <property type="term" value="P:D-gluconate metabolic process"/>
    <property type="evidence" value="ECO:0007669"/>
    <property type="project" value="UniProtKB-KW"/>
</dbReference>
<dbReference type="GO" id="GO:0035429">
    <property type="term" value="P:gluconate transmembrane transport"/>
    <property type="evidence" value="ECO:0000269"/>
    <property type="project" value="EcoCyc"/>
</dbReference>
<dbReference type="InterPro" id="IPR003474">
    <property type="entry name" value="Glcn_transporter"/>
</dbReference>
<dbReference type="NCBIfam" id="TIGR00791">
    <property type="entry name" value="gntP"/>
    <property type="match status" value="1"/>
</dbReference>
<dbReference type="NCBIfam" id="NF007781">
    <property type="entry name" value="PRK10472.1"/>
    <property type="match status" value="1"/>
</dbReference>
<dbReference type="PANTHER" id="PTHR30354">
    <property type="entry name" value="GNT FAMILY GLUCONATE TRANSPORTER"/>
    <property type="match status" value="1"/>
</dbReference>
<dbReference type="PANTHER" id="PTHR30354:SF8">
    <property type="entry name" value="LOW-AFFINITY GLUCONATE TRANSPORTER"/>
    <property type="match status" value="1"/>
</dbReference>
<dbReference type="Pfam" id="PF02447">
    <property type="entry name" value="GntP_permease"/>
    <property type="match status" value="1"/>
</dbReference>
<dbReference type="PIRSF" id="PIRSF002746">
    <property type="entry name" value="Gluconate_transporter"/>
    <property type="match status" value="1"/>
</dbReference>
<protein>
    <recommendedName>
        <fullName>Low-affinity gluconate transporter</fullName>
    </recommendedName>
    <alternativeName>
        <fullName>Gluconate permease</fullName>
    </alternativeName>
    <alternativeName>
        <fullName>Gnt-I system</fullName>
    </alternativeName>
</protein>
<organism>
    <name type="scientific">Escherichia coli (strain K12)</name>
    <dbReference type="NCBI Taxonomy" id="83333"/>
    <lineage>
        <taxon>Bacteria</taxon>
        <taxon>Pseudomonadati</taxon>
        <taxon>Pseudomonadota</taxon>
        <taxon>Gammaproteobacteria</taxon>
        <taxon>Enterobacterales</taxon>
        <taxon>Enterobacteriaceae</taxon>
        <taxon>Escherichia</taxon>
    </lineage>
</organism>
<keyword id="KW-0997">Cell inner membrane</keyword>
<keyword id="KW-1003">Cell membrane</keyword>
<keyword id="KW-0311">Gluconate utilization</keyword>
<keyword id="KW-0472">Membrane</keyword>
<keyword id="KW-1185">Reference proteome</keyword>
<keyword id="KW-0762">Sugar transport</keyword>
<keyword id="KW-0812">Transmembrane</keyword>
<keyword id="KW-1133">Transmembrane helix</keyword>
<keyword id="KW-0813">Transport</keyword>
<name>GNTU_ECOLI</name>
<comment type="function">
    <text>Part of the gluconate utilization system Gnt-I; low-affinity intake of gluconate.</text>
</comment>
<comment type="subcellular location">
    <subcellularLocation>
        <location>Cell inner membrane</location>
        <topology>Multi-pass membrane protein</topology>
    </subcellularLocation>
</comment>
<comment type="similarity">
    <text evidence="2">Belongs to the GntP permease family.</text>
</comment>
<comment type="sequence caution" evidence="2">
    <conflict type="frameshift">
        <sequence resource="EMBL-CDS" id="AAA58233"/>
    </conflict>
</comment>
<comment type="sequence caution" evidence="2">
    <conflict type="frameshift">
        <sequence resource="EMBL-CDS" id="AAA58234"/>
    </conflict>
</comment>
<sequence length="446" mass="46416">MTTLTLVLTAVGSVLLLLFLVMKARMHAFLALMVVSMGAGLFSGMPLDKIAATMEKGMGGTLGFLAVVVALGAMFGKILHETGAVDQIAVKMLKSFGHSRAHYAIGLAGLVCALPLFFEVAIVLLISVAFSMARHTGTNLVKLVIPLFAGVAAAAAFLVPGPAPMLLASQMNADFGWMILIGLCAAIPGMIIAGPLWGNFISRYVELHIPDDISEPHLGEGKMPSFGFSLSLILLPLVLVGLKTIAARFVPEGSTAYEWFEFIGHPFTAILVACLVAIYGLAMRQGMPKDKVMEICGHALQPAGIILLVIGAGGVFKQVLVDSGVGPALGEALTGMGLPIAITCFVLAAAVRIIQGSATVACLTAVGLVMPVIEQLNYSGAQMAALSICIAGGSIVVSHVNDAGFWLFGKFTGATEAETLKTWTMMETILGTVGAIVGMIAFQLLS</sequence>
<feature type="chain" id="PRO_0000061935" description="Low-affinity gluconate transporter">
    <location>
        <begin position="1"/>
        <end position="446"/>
    </location>
</feature>
<feature type="topological domain" description="Cytoplasmic" evidence="1">
    <location>
        <position position="1"/>
    </location>
</feature>
<feature type="transmembrane region" description="Helical" evidence="1">
    <location>
        <begin position="2"/>
        <end position="22"/>
    </location>
</feature>
<feature type="topological domain" description="Periplasmic" evidence="1">
    <location>
        <begin position="23"/>
        <end position="26"/>
    </location>
</feature>
<feature type="transmembrane region" description="Helical" evidence="1">
    <location>
        <begin position="27"/>
        <end position="47"/>
    </location>
</feature>
<feature type="topological domain" description="Cytoplasmic" evidence="1">
    <location>
        <begin position="48"/>
        <end position="58"/>
    </location>
</feature>
<feature type="transmembrane region" description="Helical" evidence="1">
    <location>
        <begin position="59"/>
        <end position="79"/>
    </location>
</feature>
<feature type="topological domain" description="Periplasmic" evidence="1">
    <location>
        <begin position="80"/>
        <end position="109"/>
    </location>
</feature>
<feature type="transmembrane region" description="Helical" evidence="1">
    <location>
        <begin position="110"/>
        <end position="130"/>
    </location>
</feature>
<feature type="topological domain" description="Cytoplasmic" evidence="1">
    <location>
        <begin position="131"/>
        <end position="142"/>
    </location>
</feature>
<feature type="transmembrane region" description="Helical" evidence="1">
    <location>
        <begin position="143"/>
        <end position="163"/>
    </location>
</feature>
<feature type="topological domain" description="Periplasmic" evidence="1">
    <location>
        <begin position="164"/>
        <end position="176"/>
    </location>
</feature>
<feature type="transmembrane region" description="Helical" evidence="1">
    <location>
        <begin position="177"/>
        <end position="197"/>
    </location>
</feature>
<feature type="topological domain" description="Cytoplasmic" evidence="1">
    <location>
        <begin position="198"/>
        <end position="225"/>
    </location>
</feature>
<feature type="transmembrane region" description="Helical" evidence="1">
    <location>
        <begin position="226"/>
        <end position="246"/>
    </location>
</feature>
<feature type="topological domain" description="Periplasmic" evidence="1">
    <location>
        <begin position="247"/>
        <end position="261"/>
    </location>
</feature>
<feature type="transmembrane region" description="Helical" evidence="1">
    <location>
        <begin position="262"/>
        <end position="282"/>
    </location>
</feature>
<feature type="topological domain" description="Cytoplasmic" evidence="1">
    <location>
        <begin position="283"/>
        <end position="294"/>
    </location>
</feature>
<feature type="transmembrane region" description="Helical" evidence="1">
    <location>
        <begin position="295"/>
        <end position="315"/>
    </location>
</feature>
<feature type="topological domain" description="Periplasmic" evidence="1">
    <location>
        <begin position="316"/>
        <end position="330"/>
    </location>
</feature>
<feature type="transmembrane region" description="Helical" evidence="1">
    <location>
        <begin position="331"/>
        <end position="351"/>
    </location>
</feature>
<feature type="topological domain" description="Cytoplasmic" evidence="1">
    <location>
        <position position="352"/>
    </location>
</feature>
<feature type="transmembrane region" description="Helical" evidence="1">
    <location>
        <begin position="353"/>
        <end position="373"/>
    </location>
</feature>
<feature type="topological domain" description="Periplasmic" evidence="1">
    <location>
        <begin position="374"/>
        <end position="387"/>
    </location>
</feature>
<feature type="transmembrane region" description="Helical" evidence="1">
    <location>
        <begin position="388"/>
        <end position="408"/>
    </location>
</feature>
<feature type="topological domain" description="Cytoplasmic" evidence="1">
    <location>
        <begin position="409"/>
        <end position="424"/>
    </location>
</feature>
<feature type="transmembrane region" description="Helical" evidence="1">
    <location>
        <begin position="425"/>
        <end position="445"/>
    </location>
</feature>
<feature type="topological domain" description="Periplasmic" evidence="1">
    <location>
        <position position="446"/>
    </location>
</feature>
<accession>P0AC96</accession>
<accession>P46858</accession>
<accession>P76694</accession>
<accession>P76695</accession>
<accession>Q2M799</accession>